<proteinExistence type="evidence at protein level"/>
<dbReference type="EMBL" id="AY653733">
    <property type="protein sequence ID" value="AAV50468.1"/>
    <property type="molecule type" value="Genomic_DNA"/>
</dbReference>
<dbReference type="SMR" id="Q5UQ14"/>
<dbReference type="KEGG" id="vg:9924802"/>
<dbReference type="OrthoDB" id="22247at10239"/>
<dbReference type="Proteomes" id="UP000001134">
    <property type="component" value="Genome"/>
</dbReference>
<dbReference type="GO" id="GO:0044423">
    <property type="term" value="C:virion component"/>
    <property type="evidence" value="ECO:0007669"/>
    <property type="project" value="UniProtKB-KW"/>
</dbReference>
<dbReference type="Gene3D" id="3.40.30.10">
    <property type="entry name" value="Glutaredoxin"/>
    <property type="match status" value="1"/>
</dbReference>
<dbReference type="InterPro" id="IPR011767">
    <property type="entry name" value="GLR_AS"/>
</dbReference>
<dbReference type="InterPro" id="IPR002109">
    <property type="entry name" value="Glutaredoxin"/>
</dbReference>
<dbReference type="InterPro" id="IPR036249">
    <property type="entry name" value="Thioredoxin-like_sf"/>
</dbReference>
<dbReference type="Pfam" id="PF00462">
    <property type="entry name" value="Glutaredoxin"/>
    <property type="match status" value="1"/>
</dbReference>
<dbReference type="SUPFAM" id="SSF52833">
    <property type="entry name" value="Thioredoxin-like"/>
    <property type="match status" value="1"/>
</dbReference>
<dbReference type="PROSITE" id="PS00195">
    <property type="entry name" value="GLUTAREDOXIN_1"/>
    <property type="match status" value="1"/>
</dbReference>
<dbReference type="PROSITE" id="PS51354">
    <property type="entry name" value="GLUTAREDOXIN_2"/>
    <property type="match status" value="1"/>
</dbReference>
<accession>Q5UQ14</accession>
<protein>
    <recommendedName>
        <fullName>Probable glutaredoxin</fullName>
    </recommendedName>
</protein>
<gene>
    <name type="ordered locus">MIMI_R195</name>
</gene>
<comment type="subcellular location">
    <subcellularLocation>
        <location evidence="3">Virion</location>
    </subcellularLocation>
</comment>
<comment type="similarity">
    <text evidence="4">Belongs to the glutaredoxin family.</text>
</comment>
<name>GLRX_MIMIV</name>
<evidence type="ECO:0000250" key="1"/>
<evidence type="ECO:0000255" key="2">
    <source>
        <dbReference type="PROSITE-ProRule" id="PRU00686"/>
    </source>
</evidence>
<evidence type="ECO:0000269" key="3">
    <source>
    </source>
</evidence>
<evidence type="ECO:0000305" key="4"/>
<reference key="1">
    <citation type="journal article" date="2004" name="Science">
        <title>The 1.2-megabase genome sequence of Mimivirus.</title>
        <authorList>
            <person name="Raoult D."/>
            <person name="Audic S."/>
            <person name="Robert C."/>
            <person name="Abergel C."/>
            <person name="Renesto P."/>
            <person name="Ogata H."/>
            <person name="La Scola B."/>
            <person name="Susan M."/>
            <person name="Claverie J.-M."/>
        </authorList>
    </citation>
    <scope>NUCLEOTIDE SEQUENCE [LARGE SCALE GENOMIC DNA]</scope>
    <source>
        <strain>Rowbotham-Bradford</strain>
    </source>
</reference>
<reference key="2">
    <citation type="journal article" date="2006" name="J. Virol.">
        <title>Mimivirus giant particles incorporate a large fraction of anonymous and unique gene products.</title>
        <authorList>
            <person name="Renesto P."/>
            <person name="Abergel C."/>
            <person name="Decloquement P."/>
            <person name="Moinier D."/>
            <person name="Azza S."/>
            <person name="Ogata H."/>
            <person name="Fourquet P."/>
            <person name="Gorvel J.-P."/>
            <person name="Claverie J.-M."/>
            <person name="Raoult D."/>
        </authorList>
    </citation>
    <scope>IDENTIFICATION BY MASS SPECTROMETRY [LARGE SCALE ANALYSIS]</scope>
    <scope>SUBCELLULAR LOCATION</scope>
</reference>
<organism>
    <name type="scientific">Acanthamoeba polyphaga mimivirus</name>
    <name type="common">APMV</name>
    <dbReference type="NCBI Taxonomy" id="212035"/>
    <lineage>
        <taxon>Viruses</taxon>
        <taxon>Varidnaviria</taxon>
        <taxon>Bamfordvirae</taxon>
        <taxon>Nucleocytoviricota</taxon>
        <taxon>Megaviricetes</taxon>
        <taxon>Imitervirales</taxon>
        <taxon>Mimiviridae</taxon>
        <taxon>Megamimivirinae</taxon>
        <taxon>Mimivirus</taxon>
        <taxon>Mimivirus bradfordmassiliense</taxon>
    </lineage>
</organism>
<sequence>MSYYMSPIVQKITGADPGTFVLFYVPECPYCQRALSTLRERNLPFKGYNINNISGNMPRLLQVLTTYSNLTGFNPYHTTKPIIFINGKFIGGMDDLAKYLDVQFTQ</sequence>
<keyword id="KW-1015">Disulfide bond</keyword>
<keyword id="KW-0249">Electron transport</keyword>
<keyword id="KW-0676">Redox-active center</keyword>
<keyword id="KW-1185">Reference proteome</keyword>
<keyword id="KW-0813">Transport</keyword>
<keyword id="KW-0946">Virion</keyword>
<organismHost>
    <name type="scientific">Acanthamoeba polyphaga</name>
    <name type="common">Amoeba</name>
    <dbReference type="NCBI Taxonomy" id="5757"/>
</organismHost>
<feature type="chain" id="PRO_0000141637" description="Probable glutaredoxin">
    <location>
        <begin position="1"/>
        <end position="106"/>
    </location>
</feature>
<feature type="domain" description="Glutaredoxin" evidence="2">
    <location>
        <begin position="8"/>
        <end position="106"/>
    </location>
</feature>
<feature type="disulfide bond" description="Redox-active" evidence="1">
    <location>
        <begin position="28"/>
        <end position="31"/>
    </location>
</feature>